<geneLocation type="chloroplast"/>
<reference key="1">
    <citation type="journal article" date="2007" name="Theor. Appl. Genet.">
        <title>Complete chloroplast genome sequences of Hordeum vulgare, Sorghum bicolor and Agrostis stolonifera, and comparative analyses with other grass genomes.</title>
        <authorList>
            <person name="Saski C."/>
            <person name="Lee S.-B."/>
            <person name="Fjellheim S."/>
            <person name="Guda C."/>
            <person name="Jansen R.K."/>
            <person name="Luo H."/>
            <person name="Tomkins J."/>
            <person name="Rognli O.A."/>
            <person name="Daniell H."/>
            <person name="Clarke J.L."/>
        </authorList>
    </citation>
    <scope>NUCLEOTIDE SEQUENCE [LARGE SCALE GENOMIC DNA]</scope>
    <source>
        <strain>cv. Morex</strain>
    </source>
</reference>
<feature type="chain" id="PRO_0000344762" description="Large ribosomal subunit protein bL36c">
    <location>
        <begin position="1"/>
        <end position="37"/>
    </location>
</feature>
<name>RK36_HORVU</name>
<gene>
    <name evidence="1" type="primary">rpl36</name>
</gene>
<dbReference type="EMBL" id="EF115541">
    <property type="protein sequence ID" value="ABK79445.1"/>
    <property type="molecule type" value="Genomic_DNA"/>
</dbReference>
<dbReference type="RefSeq" id="YP_010144458.1">
    <property type="nucleotide sequence ID" value="NC_056985.1"/>
</dbReference>
<dbReference type="RefSeq" id="YP_874686.1">
    <property type="nucleotide sequence ID" value="NC_008590.1"/>
</dbReference>
<dbReference type="SMR" id="A1E9M4"/>
<dbReference type="GeneID" id="4525108"/>
<dbReference type="GeneID" id="67140681"/>
<dbReference type="GO" id="GO:0009507">
    <property type="term" value="C:chloroplast"/>
    <property type="evidence" value="ECO:0007669"/>
    <property type="project" value="UniProtKB-SubCell"/>
</dbReference>
<dbReference type="GO" id="GO:1990904">
    <property type="term" value="C:ribonucleoprotein complex"/>
    <property type="evidence" value="ECO:0007669"/>
    <property type="project" value="UniProtKB-KW"/>
</dbReference>
<dbReference type="GO" id="GO:0005840">
    <property type="term" value="C:ribosome"/>
    <property type="evidence" value="ECO:0007669"/>
    <property type="project" value="UniProtKB-KW"/>
</dbReference>
<dbReference type="GO" id="GO:0003735">
    <property type="term" value="F:structural constituent of ribosome"/>
    <property type="evidence" value="ECO:0007669"/>
    <property type="project" value="InterPro"/>
</dbReference>
<dbReference type="GO" id="GO:0006412">
    <property type="term" value="P:translation"/>
    <property type="evidence" value="ECO:0007669"/>
    <property type="project" value="UniProtKB-UniRule"/>
</dbReference>
<dbReference type="HAMAP" id="MF_00251">
    <property type="entry name" value="Ribosomal_bL36"/>
    <property type="match status" value="1"/>
</dbReference>
<dbReference type="InterPro" id="IPR000473">
    <property type="entry name" value="Ribosomal_bL36"/>
</dbReference>
<dbReference type="InterPro" id="IPR035977">
    <property type="entry name" value="Ribosomal_bL36_sp"/>
</dbReference>
<dbReference type="NCBIfam" id="TIGR01022">
    <property type="entry name" value="rpmJ_bact"/>
    <property type="match status" value="1"/>
</dbReference>
<dbReference type="PANTHER" id="PTHR42888">
    <property type="entry name" value="50S RIBOSOMAL PROTEIN L36, CHLOROPLASTIC"/>
    <property type="match status" value="1"/>
</dbReference>
<dbReference type="PANTHER" id="PTHR42888:SF1">
    <property type="entry name" value="LARGE RIBOSOMAL SUBUNIT PROTEIN BL36C"/>
    <property type="match status" value="1"/>
</dbReference>
<dbReference type="Pfam" id="PF00444">
    <property type="entry name" value="Ribosomal_L36"/>
    <property type="match status" value="1"/>
</dbReference>
<dbReference type="SUPFAM" id="SSF57840">
    <property type="entry name" value="Ribosomal protein L36"/>
    <property type="match status" value="1"/>
</dbReference>
<dbReference type="PROSITE" id="PS00828">
    <property type="entry name" value="RIBOSOMAL_L36"/>
    <property type="match status" value="1"/>
</dbReference>
<protein>
    <recommendedName>
        <fullName evidence="1">Large ribosomal subunit protein bL36c</fullName>
    </recommendedName>
    <alternativeName>
        <fullName evidence="2">50S ribosomal protein L36, chloroplastic</fullName>
    </alternativeName>
</protein>
<proteinExistence type="inferred from homology"/>
<accession>A1E9M4</accession>
<organism>
    <name type="scientific">Hordeum vulgare</name>
    <name type="common">Barley</name>
    <dbReference type="NCBI Taxonomy" id="4513"/>
    <lineage>
        <taxon>Eukaryota</taxon>
        <taxon>Viridiplantae</taxon>
        <taxon>Streptophyta</taxon>
        <taxon>Embryophyta</taxon>
        <taxon>Tracheophyta</taxon>
        <taxon>Spermatophyta</taxon>
        <taxon>Magnoliopsida</taxon>
        <taxon>Liliopsida</taxon>
        <taxon>Poales</taxon>
        <taxon>Poaceae</taxon>
        <taxon>BOP clade</taxon>
        <taxon>Pooideae</taxon>
        <taxon>Triticodae</taxon>
        <taxon>Triticeae</taxon>
        <taxon>Hordeinae</taxon>
        <taxon>Hordeum</taxon>
    </lineage>
</organism>
<keyword id="KW-0150">Chloroplast</keyword>
<keyword id="KW-0934">Plastid</keyword>
<keyword id="KW-0687">Ribonucleoprotein</keyword>
<keyword id="KW-0689">Ribosomal protein</keyword>
<comment type="subcellular location">
    <subcellularLocation>
        <location>Plastid</location>
        <location>Chloroplast</location>
    </subcellularLocation>
</comment>
<comment type="similarity">
    <text evidence="1">Belongs to the bacterial ribosomal protein bL36 family.</text>
</comment>
<evidence type="ECO:0000255" key="1">
    <source>
        <dbReference type="HAMAP-Rule" id="MF_00251"/>
    </source>
</evidence>
<evidence type="ECO:0000305" key="2"/>
<sequence>MKIRASVRKICTKCRLIRRRGRIRVICSNPKHKQRQG</sequence>